<feature type="chain" id="PRO_1000078202" description="Ribonuclease P protein component">
    <location>
        <begin position="1"/>
        <end position="112"/>
    </location>
</feature>
<accession>A5CY49</accession>
<comment type="function">
    <text evidence="1">RNaseP catalyzes the removal of the 5'-leader sequence from pre-tRNA to produce the mature 5'-terminus. It can also cleave other RNA substrates such as 4.5S RNA. The protein component plays an auxiliary but essential role in vivo by binding to the 5'-leader sequence and broadening the substrate specificity of the ribozyme.</text>
</comment>
<comment type="catalytic activity">
    <reaction evidence="1">
        <text>Endonucleolytic cleavage of RNA, removing 5'-extranucleotides from tRNA precursor.</text>
        <dbReference type="EC" id="3.1.26.5"/>
    </reaction>
</comment>
<comment type="subunit">
    <text evidence="1">Consists of a catalytic RNA component (M1 or rnpB) and a protein subunit.</text>
</comment>
<comment type="similarity">
    <text evidence="1">Belongs to the RnpA family.</text>
</comment>
<gene>
    <name evidence="1" type="primary">rnpA</name>
    <name type="ordered locus">PTH_2920</name>
</gene>
<name>RNPA_PELTS</name>
<dbReference type="EC" id="3.1.26.5" evidence="1"/>
<dbReference type="EMBL" id="AP009389">
    <property type="protein sequence ID" value="BAF61101.1"/>
    <property type="molecule type" value="Genomic_DNA"/>
</dbReference>
<dbReference type="SMR" id="A5CY49"/>
<dbReference type="STRING" id="370438.PTH_2920"/>
<dbReference type="KEGG" id="pth:PTH_2920"/>
<dbReference type="eggNOG" id="COG0594">
    <property type="taxonomic scope" value="Bacteria"/>
</dbReference>
<dbReference type="HOGENOM" id="CLU_117179_9_4_9"/>
<dbReference type="Proteomes" id="UP000006556">
    <property type="component" value="Chromosome"/>
</dbReference>
<dbReference type="GO" id="GO:0030677">
    <property type="term" value="C:ribonuclease P complex"/>
    <property type="evidence" value="ECO:0007669"/>
    <property type="project" value="TreeGrafter"/>
</dbReference>
<dbReference type="GO" id="GO:0042781">
    <property type="term" value="F:3'-tRNA processing endoribonuclease activity"/>
    <property type="evidence" value="ECO:0007669"/>
    <property type="project" value="TreeGrafter"/>
</dbReference>
<dbReference type="GO" id="GO:0004526">
    <property type="term" value="F:ribonuclease P activity"/>
    <property type="evidence" value="ECO:0007669"/>
    <property type="project" value="UniProtKB-UniRule"/>
</dbReference>
<dbReference type="GO" id="GO:0000049">
    <property type="term" value="F:tRNA binding"/>
    <property type="evidence" value="ECO:0007669"/>
    <property type="project" value="UniProtKB-UniRule"/>
</dbReference>
<dbReference type="GO" id="GO:0001682">
    <property type="term" value="P:tRNA 5'-leader removal"/>
    <property type="evidence" value="ECO:0007669"/>
    <property type="project" value="UniProtKB-UniRule"/>
</dbReference>
<dbReference type="Gene3D" id="3.30.230.10">
    <property type="match status" value="1"/>
</dbReference>
<dbReference type="HAMAP" id="MF_00227">
    <property type="entry name" value="RNase_P"/>
    <property type="match status" value="1"/>
</dbReference>
<dbReference type="InterPro" id="IPR020568">
    <property type="entry name" value="Ribosomal_Su5_D2-typ_SF"/>
</dbReference>
<dbReference type="InterPro" id="IPR014721">
    <property type="entry name" value="Ribsml_uS5_D2-typ_fold_subgr"/>
</dbReference>
<dbReference type="InterPro" id="IPR000100">
    <property type="entry name" value="RNase_P"/>
</dbReference>
<dbReference type="InterPro" id="IPR020539">
    <property type="entry name" value="RNase_P_CS"/>
</dbReference>
<dbReference type="NCBIfam" id="TIGR00188">
    <property type="entry name" value="rnpA"/>
    <property type="match status" value="1"/>
</dbReference>
<dbReference type="PANTHER" id="PTHR33992">
    <property type="entry name" value="RIBONUCLEASE P PROTEIN COMPONENT"/>
    <property type="match status" value="1"/>
</dbReference>
<dbReference type="PANTHER" id="PTHR33992:SF1">
    <property type="entry name" value="RIBONUCLEASE P PROTEIN COMPONENT"/>
    <property type="match status" value="1"/>
</dbReference>
<dbReference type="Pfam" id="PF00825">
    <property type="entry name" value="Ribonuclease_P"/>
    <property type="match status" value="1"/>
</dbReference>
<dbReference type="SUPFAM" id="SSF54211">
    <property type="entry name" value="Ribosomal protein S5 domain 2-like"/>
    <property type="match status" value="1"/>
</dbReference>
<dbReference type="PROSITE" id="PS00648">
    <property type="entry name" value="RIBONUCLEASE_P"/>
    <property type="match status" value="1"/>
</dbReference>
<sequence>MKVLDVLKKNKDYGRVCRRGKSVADRHIVMYFLDNNLGRCRYGFAVSRKIRSAVRRNRARRLLREACRLNKEKFPEGYDFVFMARRDMTDLKCQQVEESILKLLKRAEINRS</sequence>
<reference key="1">
    <citation type="journal article" date="2008" name="Genome Res.">
        <title>The genome of Pelotomaculum thermopropionicum reveals niche-associated evolution in anaerobic microbiota.</title>
        <authorList>
            <person name="Kosaka T."/>
            <person name="Kato S."/>
            <person name="Shimoyama T."/>
            <person name="Ishii S."/>
            <person name="Abe T."/>
            <person name="Watanabe K."/>
        </authorList>
    </citation>
    <scope>NUCLEOTIDE SEQUENCE [LARGE SCALE GENOMIC DNA]</scope>
    <source>
        <strain>DSM 13744 / JCM 10971 / SI</strain>
    </source>
</reference>
<organism>
    <name type="scientific">Pelotomaculum thermopropionicum (strain DSM 13744 / JCM 10971 / SI)</name>
    <dbReference type="NCBI Taxonomy" id="370438"/>
    <lineage>
        <taxon>Bacteria</taxon>
        <taxon>Bacillati</taxon>
        <taxon>Bacillota</taxon>
        <taxon>Clostridia</taxon>
        <taxon>Eubacteriales</taxon>
        <taxon>Desulfotomaculaceae</taxon>
        <taxon>Pelotomaculum</taxon>
    </lineage>
</organism>
<keyword id="KW-0255">Endonuclease</keyword>
<keyword id="KW-0378">Hydrolase</keyword>
<keyword id="KW-0540">Nuclease</keyword>
<keyword id="KW-1185">Reference proteome</keyword>
<keyword id="KW-0694">RNA-binding</keyword>
<keyword id="KW-0819">tRNA processing</keyword>
<proteinExistence type="inferred from homology"/>
<evidence type="ECO:0000255" key="1">
    <source>
        <dbReference type="HAMAP-Rule" id="MF_00227"/>
    </source>
</evidence>
<protein>
    <recommendedName>
        <fullName evidence="1">Ribonuclease P protein component</fullName>
        <shortName evidence="1">RNase P protein</shortName>
        <shortName evidence="1">RNaseP protein</shortName>
        <ecNumber evidence="1">3.1.26.5</ecNumber>
    </recommendedName>
    <alternativeName>
        <fullName evidence="1">Protein C5</fullName>
    </alternativeName>
</protein>